<reference key="1">
    <citation type="submission" date="2007-09" db="EMBL/GenBank/DDBJ databases">
        <title>Complete genome sequence of Rickettsia akari.</title>
        <authorList>
            <person name="Madan A."/>
            <person name="Fahey J."/>
            <person name="Helton E."/>
            <person name="Ketteman M."/>
            <person name="Madan A."/>
            <person name="Rodrigues S."/>
            <person name="Sanchez A."/>
            <person name="Whiting M."/>
            <person name="Dasch G."/>
            <person name="Eremeeva M."/>
        </authorList>
    </citation>
    <scope>NUCLEOTIDE SEQUENCE [LARGE SCALE GENOMIC DNA]</scope>
    <source>
        <strain>Hartford</strain>
    </source>
</reference>
<organism>
    <name type="scientific">Rickettsia akari (strain Hartford)</name>
    <dbReference type="NCBI Taxonomy" id="293614"/>
    <lineage>
        <taxon>Bacteria</taxon>
        <taxon>Pseudomonadati</taxon>
        <taxon>Pseudomonadota</taxon>
        <taxon>Alphaproteobacteria</taxon>
        <taxon>Rickettsiales</taxon>
        <taxon>Rickettsiaceae</taxon>
        <taxon>Rickettsieae</taxon>
        <taxon>Rickettsia</taxon>
        <taxon>spotted fever group</taxon>
    </lineage>
</organism>
<evidence type="ECO:0000255" key="1">
    <source>
        <dbReference type="HAMAP-Rule" id="MF_00379"/>
    </source>
</evidence>
<protein>
    <recommendedName>
        <fullName evidence="1">tRNA modification GTPase MnmE</fullName>
        <ecNumber evidence="1">3.6.-.-</ecNumber>
    </recommendedName>
</protein>
<dbReference type="EC" id="3.6.-.-" evidence="1"/>
<dbReference type="EMBL" id="CP000847">
    <property type="protein sequence ID" value="ABV75361.1"/>
    <property type="molecule type" value="Genomic_DNA"/>
</dbReference>
<dbReference type="RefSeq" id="WP_012149991.1">
    <property type="nucleotide sequence ID" value="NC_009881.1"/>
</dbReference>
<dbReference type="SMR" id="A8GPN6"/>
<dbReference type="STRING" id="293614.A1C_05630"/>
<dbReference type="KEGG" id="rak:A1C_05630"/>
<dbReference type="eggNOG" id="COG0486">
    <property type="taxonomic scope" value="Bacteria"/>
</dbReference>
<dbReference type="HOGENOM" id="CLU_019624_3_1_5"/>
<dbReference type="Proteomes" id="UP000006830">
    <property type="component" value="Chromosome"/>
</dbReference>
<dbReference type="GO" id="GO:0005737">
    <property type="term" value="C:cytoplasm"/>
    <property type="evidence" value="ECO:0007669"/>
    <property type="project" value="UniProtKB-SubCell"/>
</dbReference>
<dbReference type="GO" id="GO:0005525">
    <property type="term" value="F:GTP binding"/>
    <property type="evidence" value="ECO:0007669"/>
    <property type="project" value="UniProtKB-UniRule"/>
</dbReference>
<dbReference type="GO" id="GO:0003924">
    <property type="term" value="F:GTPase activity"/>
    <property type="evidence" value="ECO:0007669"/>
    <property type="project" value="UniProtKB-UniRule"/>
</dbReference>
<dbReference type="GO" id="GO:0046872">
    <property type="term" value="F:metal ion binding"/>
    <property type="evidence" value="ECO:0007669"/>
    <property type="project" value="UniProtKB-KW"/>
</dbReference>
<dbReference type="GO" id="GO:0030488">
    <property type="term" value="P:tRNA methylation"/>
    <property type="evidence" value="ECO:0007669"/>
    <property type="project" value="TreeGrafter"/>
</dbReference>
<dbReference type="GO" id="GO:0002098">
    <property type="term" value="P:tRNA wobble uridine modification"/>
    <property type="evidence" value="ECO:0007669"/>
    <property type="project" value="TreeGrafter"/>
</dbReference>
<dbReference type="CDD" id="cd04164">
    <property type="entry name" value="trmE"/>
    <property type="match status" value="1"/>
</dbReference>
<dbReference type="CDD" id="cd14858">
    <property type="entry name" value="TrmE_N"/>
    <property type="match status" value="1"/>
</dbReference>
<dbReference type="FunFam" id="3.30.1360.120:FF:000007">
    <property type="entry name" value="tRNA modification GTPase GTPBP3, mitochondrial"/>
    <property type="match status" value="1"/>
</dbReference>
<dbReference type="Gene3D" id="3.40.50.300">
    <property type="entry name" value="P-loop containing nucleotide triphosphate hydrolases"/>
    <property type="match status" value="1"/>
</dbReference>
<dbReference type="Gene3D" id="3.30.1360.120">
    <property type="entry name" value="Probable tRNA modification gtpase trme, domain 1"/>
    <property type="match status" value="1"/>
</dbReference>
<dbReference type="Gene3D" id="1.20.120.430">
    <property type="entry name" value="tRNA modification GTPase MnmE domain 2"/>
    <property type="match status" value="1"/>
</dbReference>
<dbReference type="HAMAP" id="MF_00379">
    <property type="entry name" value="GTPase_MnmE"/>
    <property type="match status" value="1"/>
</dbReference>
<dbReference type="InterPro" id="IPR031168">
    <property type="entry name" value="G_TrmE"/>
</dbReference>
<dbReference type="InterPro" id="IPR006073">
    <property type="entry name" value="GTP-bd"/>
</dbReference>
<dbReference type="InterPro" id="IPR018948">
    <property type="entry name" value="GTP-bd_TrmE_N"/>
</dbReference>
<dbReference type="InterPro" id="IPR004520">
    <property type="entry name" value="GTPase_MnmE"/>
</dbReference>
<dbReference type="InterPro" id="IPR027368">
    <property type="entry name" value="MnmE_dom2"/>
</dbReference>
<dbReference type="InterPro" id="IPR025867">
    <property type="entry name" value="MnmE_helical"/>
</dbReference>
<dbReference type="InterPro" id="IPR027417">
    <property type="entry name" value="P-loop_NTPase"/>
</dbReference>
<dbReference type="InterPro" id="IPR005225">
    <property type="entry name" value="Small_GTP-bd"/>
</dbReference>
<dbReference type="InterPro" id="IPR027266">
    <property type="entry name" value="TrmE/GcvT_dom1"/>
</dbReference>
<dbReference type="NCBIfam" id="TIGR00450">
    <property type="entry name" value="mnmE_trmE_thdF"/>
    <property type="match status" value="1"/>
</dbReference>
<dbReference type="NCBIfam" id="NF003661">
    <property type="entry name" value="PRK05291.1-3"/>
    <property type="match status" value="1"/>
</dbReference>
<dbReference type="NCBIfam" id="TIGR00231">
    <property type="entry name" value="small_GTP"/>
    <property type="match status" value="1"/>
</dbReference>
<dbReference type="PANTHER" id="PTHR42714">
    <property type="entry name" value="TRNA MODIFICATION GTPASE GTPBP3"/>
    <property type="match status" value="1"/>
</dbReference>
<dbReference type="PANTHER" id="PTHR42714:SF2">
    <property type="entry name" value="TRNA MODIFICATION GTPASE GTPBP3, MITOCHONDRIAL"/>
    <property type="match status" value="1"/>
</dbReference>
<dbReference type="Pfam" id="PF01926">
    <property type="entry name" value="MMR_HSR1"/>
    <property type="match status" value="1"/>
</dbReference>
<dbReference type="Pfam" id="PF12631">
    <property type="entry name" value="MnmE_helical"/>
    <property type="match status" value="1"/>
</dbReference>
<dbReference type="Pfam" id="PF10396">
    <property type="entry name" value="TrmE_N"/>
    <property type="match status" value="1"/>
</dbReference>
<dbReference type="SUPFAM" id="SSF52540">
    <property type="entry name" value="P-loop containing nucleoside triphosphate hydrolases"/>
    <property type="match status" value="1"/>
</dbReference>
<dbReference type="SUPFAM" id="SSF116878">
    <property type="entry name" value="TrmE connector domain"/>
    <property type="match status" value="1"/>
</dbReference>
<dbReference type="PROSITE" id="PS51709">
    <property type="entry name" value="G_TRME"/>
    <property type="match status" value="1"/>
</dbReference>
<feature type="chain" id="PRO_1000048864" description="tRNA modification GTPase MnmE">
    <location>
        <begin position="1"/>
        <end position="445"/>
    </location>
</feature>
<feature type="domain" description="TrmE-type G">
    <location>
        <begin position="215"/>
        <end position="371"/>
    </location>
</feature>
<feature type="binding site" evidence="1">
    <location>
        <position position="20"/>
    </location>
    <ligand>
        <name>(6S)-5-formyl-5,6,7,8-tetrahydrofolate</name>
        <dbReference type="ChEBI" id="CHEBI:57457"/>
    </ligand>
</feature>
<feature type="binding site" evidence="1">
    <location>
        <position position="79"/>
    </location>
    <ligand>
        <name>(6S)-5-formyl-5,6,7,8-tetrahydrofolate</name>
        <dbReference type="ChEBI" id="CHEBI:57457"/>
    </ligand>
</feature>
<feature type="binding site" evidence="1">
    <location>
        <position position="119"/>
    </location>
    <ligand>
        <name>(6S)-5-formyl-5,6,7,8-tetrahydrofolate</name>
        <dbReference type="ChEBI" id="CHEBI:57457"/>
    </ligand>
</feature>
<feature type="binding site" evidence="1">
    <location>
        <begin position="225"/>
        <end position="230"/>
    </location>
    <ligand>
        <name>GTP</name>
        <dbReference type="ChEBI" id="CHEBI:37565"/>
    </ligand>
</feature>
<feature type="binding site" evidence="1">
    <location>
        <position position="225"/>
    </location>
    <ligand>
        <name>K(+)</name>
        <dbReference type="ChEBI" id="CHEBI:29103"/>
    </ligand>
</feature>
<feature type="binding site" evidence="1">
    <location>
        <position position="229"/>
    </location>
    <ligand>
        <name>Mg(2+)</name>
        <dbReference type="ChEBI" id="CHEBI:18420"/>
    </ligand>
</feature>
<feature type="binding site" evidence="1">
    <location>
        <begin position="244"/>
        <end position="250"/>
    </location>
    <ligand>
        <name>GTP</name>
        <dbReference type="ChEBI" id="CHEBI:37565"/>
    </ligand>
</feature>
<feature type="binding site" evidence="1">
    <location>
        <position position="244"/>
    </location>
    <ligand>
        <name>K(+)</name>
        <dbReference type="ChEBI" id="CHEBI:29103"/>
    </ligand>
</feature>
<feature type="binding site" evidence="1">
    <location>
        <position position="246"/>
    </location>
    <ligand>
        <name>K(+)</name>
        <dbReference type="ChEBI" id="CHEBI:29103"/>
    </ligand>
</feature>
<feature type="binding site" evidence="1">
    <location>
        <position position="249"/>
    </location>
    <ligand>
        <name>K(+)</name>
        <dbReference type="ChEBI" id="CHEBI:29103"/>
    </ligand>
</feature>
<feature type="binding site" evidence="1">
    <location>
        <position position="250"/>
    </location>
    <ligand>
        <name>Mg(2+)</name>
        <dbReference type="ChEBI" id="CHEBI:18420"/>
    </ligand>
</feature>
<feature type="binding site" evidence="1">
    <location>
        <begin position="269"/>
        <end position="272"/>
    </location>
    <ligand>
        <name>GTP</name>
        <dbReference type="ChEBI" id="CHEBI:37565"/>
    </ligand>
</feature>
<feature type="binding site" evidence="1">
    <location>
        <position position="445"/>
    </location>
    <ligand>
        <name>(6S)-5-formyl-5,6,7,8-tetrahydrofolate</name>
        <dbReference type="ChEBI" id="CHEBI:57457"/>
    </ligand>
</feature>
<name>MNME_RICAH</name>
<accession>A8GPN6</accession>
<sequence length="445" mass="49588">METIFAQSSAFGKAGVAVFRISGPKSLEVLQLLTGKKAFKPRLMYYQQIIAPETKELIDNAMVVYFKLPNSFTGEDVVEIHTHGSKAISIMMINTLLNISDIRLAEAGEFTKRAFLNNKFDLTAAEGIADLINAETIMQHRQAIRQASGRLEELYNSWRSQLLKIISLLEAYIDFPDEDIPDSVLNDVNNTHKNLVNEISNYLNDNRRGELLNSGLKLAIVGPPNTGKSSLLNFLMQRDIAMVSNIAGTTRDIIEGHLDIGGYPIILQDTAGIREESSDIIEQEGIKRAINSAKTADIKIIMFDAKKLDSSINEDITGLIDENTIVIINKIDLIEPSKVFSIEDKYKCLRVSVKNNIALSSILKNIENIAENMAGFTETPYITNQRHRHYLKQALSHLTDFSLDNDLVLATEDIRITARCIGAITGVINVEEILGEIFQNFCIGK</sequence>
<keyword id="KW-0963">Cytoplasm</keyword>
<keyword id="KW-0342">GTP-binding</keyword>
<keyword id="KW-0378">Hydrolase</keyword>
<keyword id="KW-0460">Magnesium</keyword>
<keyword id="KW-0479">Metal-binding</keyword>
<keyword id="KW-0547">Nucleotide-binding</keyword>
<keyword id="KW-0630">Potassium</keyword>
<keyword id="KW-0819">tRNA processing</keyword>
<gene>
    <name evidence="1" type="primary">mnmE</name>
    <name evidence="1" type="synonym">trmE</name>
    <name type="ordered locus">A1C_05630</name>
</gene>
<comment type="function">
    <text evidence="1">Exhibits a very high intrinsic GTPase hydrolysis rate. Involved in the addition of a carboxymethylaminomethyl (cmnm) group at the wobble position (U34) of certain tRNAs, forming tRNA-cmnm(5)s(2)U34.</text>
</comment>
<comment type="cofactor">
    <cofactor evidence="1">
        <name>K(+)</name>
        <dbReference type="ChEBI" id="CHEBI:29103"/>
    </cofactor>
    <text evidence="1">Binds 1 potassium ion per subunit.</text>
</comment>
<comment type="subunit">
    <text evidence="1">Homodimer. Heterotetramer of two MnmE and two MnmG subunits.</text>
</comment>
<comment type="subcellular location">
    <subcellularLocation>
        <location evidence="1">Cytoplasm</location>
    </subcellularLocation>
</comment>
<comment type="similarity">
    <text evidence="1">Belongs to the TRAFAC class TrmE-Era-EngA-EngB-Septin-like GTPase superfamily. TrmE GTPase family.</text>
</comment>
<proteinExistence type="inferred from homology"/>